<proteinExistence type="inferred from homology"/>
<dbReference type="EMBL" id="AJ249237">
    <property type="status" value="NOT_ANNOTATED_CDS"/>
    <property type="molecule type" value="Genomic_RNA"/>
</dbReference>
<dbReference type="SMR" id="P0C1L9"/>
<dbReference type="Proteomes" id="UP000121652">
    <property type="component" value="Segment"/>
</dbReference>
<dbReference type="GO" id="GO:0030430">
    <property type="term" value="C:host cell cytoplasm"/>
    <property type="evidence" value="ECO:0007669"/>
    <property type="project" value="UniProtKB-SubCell"/>
</dbReference>
<dbReference type="GO" id="GO:0020002">
    <property type="term" value="C:host cell plasma membrane"/>
    <property type="evidence" value="ECO:0007669"/>
    <property type="project" value="UniProtKB-SubCell"/>
</dbReference>
<dbReference type="GO" id="GO:0016020">
    <property type="term" value="C:membrane"/>
    <property type="evidence" value="ECO:0007669"/>
    <property type="project" value="UniProtKB-UniRule"/>
</dbReference>
<dbReference type="GO" id="GO:0044423">
    <property type="term" value="C:virion component"/>
    <property type="evidence" value="ECO:0007669"/>
    <property type="project" value="UniProtKB-UniRule"/>
</dbReference>
<dbReference type="GO" id="GO:0046872">
    <property type="term" value="F:metal ion binding"/>
    <property type="evidence" value="ECO:0007669"/>
    <property type="project" value="UniProtKB-KW"/>
</dbReference>
<dbReference type="GO" id="GO:0003723">
    <property type="term" value="F:RNA binding"/>
    <property type="evidence" value="ECO:0007669"/>
    <property type="project" value="UniProtKB-UniRule"/>
</dbReference>
<dbReference type="GO" id="GO:0019058">
    <property type="term" value="P:viral life cycle"/>
    <property type="evidence" value="ECO:0007669"/>
    <property type="project" value="InterPro"/>
</dbReference>
<dbReference type="HAMAP" id="MF_04081">
    <property type="entry name" value="HIV_VIF"/>
    <property type="match status" value="1"/>
</dbReference>
<dbReference type="InterPro" id="IPR000475">
    <property type="entry name" value="Vif"/>
</dbReference>
<dbReference type="Pfam" id="PF00559">
    <property type="entry name" value="Vif"/>
    <property type="match status" value="1"/>
</dbReference>
<dbReference type="PRINTS" id="PR00349">
    <property type="entry name" value="VIRIONINFFCT"/>
</dbReference>
<reference key="1">
    <citation type="journal article" date="2000" name="AIDS Res. Hum. Retroviruses">
        <title>Near-full-length genome sequencing of divergent African HIV type 1 subtype F viruses leads to the identification of a new HIV type 1 subtype designated K.</title>
        <authorList>
            <person name="Triques K."/>
            <person name="Bourgeois A."/>
            <person name="Vidale N."/>
            <person name="Mpoudi-Ngole E."/>
            <person name="Mulanga-Kabeya C."/>
            <person name="Nzilambi N."/>
            <person name="Torimiro N."/>
            <person name="Saman E."/>
            <person name="Delaporte E."/>
            <person name="Peeters M."/>
        </authorList>
    </citation>
    <scope>NUCLEOTIDE SEQUENCE [GENOMIC RNA]</scope>
</reference>
<keyword id="KW-0014">AIDS</keyword>
<keyword id="KW-1032">Host cell membrane</keyword>
<keyword id="KW-1035">Host cytoplasm</keyword>
<keyword id="KW-1043">Host membrane</keyword>
<keyword id="KW-0945">Host-virus interaction</keyword>
<keyword id="KW-0472">Membrane</keyword>
<keyword id="KW-0479">Metal-binding</keyword>
<keyword id="KW-0597">Phosphoprotein</keyword>
<keyword id="KW-0694">RNA-binding</keyword>
<keyword id="KW-0832">Ubl conjugation</keyword>
<keyword id="KW-0833">Ubl conjugation pathway</keyword>
<keyword id="KW-0946">Virion</keyword>
<keyword id="KW-0862">Zinc</keyword>
<organismHost>
    <name type="scientific">Homo sapiens</name>
    <name type="common">Human</name>
    <dbReference type="NCBI Taxonomy" id="9606"/>
</organismHost>
<feature type="chain" id="PRO_0000245129" description="Virion infectivity factor" evidence="2">
    <location>
        <begin position="1"/>
        <end position="193"/>
    </location>
</feature>
<feature type="chain" id="PRO_0000245130" description="p17" evidence="2">
    <location>
        <begin position="1"/>
        <end position="151"/>
    </location>
</feature>
<feature type="chain" id="PRO_0000441078" description="p7" evidence="2">
    <location>
        <begin position="152"/>
        <end position="193"/>
    </location>
</feature>
<feature type="region of interest" description="Interaction with host APOBEC3F; F1-box" evidence="2">
    <location>
        <begin position="14"/>
        <end position="17"/>
    </location>
</feature>
<feature type="region of interest" description="Interaction with host APOBEC3G; G-box" evidence="2">
    <location>
        <begin position="40"/>
        <end position="44"/>
    </location>
</feature>
<feature type="region of interest" description="Interaction with host APOBEC3F and APOBEC3G; FG-box" evidence="2">
    <location>
        <begin position="54"/>
        <end position="73"/>
    </location>
</feature>
<feature type="region of interest" description="Interaction with host APOBEC3F; F2-box" evidence="2">
    <location>
        <begin position="75"/>
        <end position="80"/>
    </location>
</feature>
<feature type="region of interest" description="RNA-binding" evidence="2">
    <location>
        <begin position="76"/>
        <end position="115"/>
    </location>
</feature>
<feature type="region of interest" description="SOCS box-like" evidence="2">
    <location>
        <begin position="152"/>
        <end position="181"/>
    </location>
</feature>
<feature type="region of interest" description="Multimerization" evidence="2">
    <location>
        <begin position="152"/>
        <end position="165"/>
    </location>
</feature>
<feature type="region of interest" description="Membrane association" evidence="2">
    <location>
        <begin position="172"/>
        <end position="173"/>
    </location>
</feature>
<feature type="region of interest" description="Disordered" evidence="3">
    <location>
        <begin position="173"/>
        <end position="193"/>
    </location>
</feature>
<feature type="short sequence motif" description="HCCH motif" evidence="2">
    <location>
        <begin position="109"/>
        <end position="140"/>
    </location>
</feature>
<feature type="short sequence motif" description="BC-box-like motif" evidence="2">
    <location>
        <begin position="145"/>
        <end position="154"/>
    </location>
</feature>
<feature type="binding site" evidence="2">
    <location>
        <position position="109"/>
    </location>
    <ligand>
        <name>Zn(2+)</name>
        <dbReference type="ChEBI" id="CHEBI:29105"/>
    </ligand>
</feature>
<feature type="binding site" evidence="2">
    <location>
        <position position="115"/>
    </location>
    <ligand>
        <name>Zn(2+)</name>
        <dbReference type="ChEBI" id="CHEBI:29105"/>
    </ligand>
</feature>
<feature type="binding site" evidence="2">
    <location>
        <position position="134"/>
    </location>
    <ligand>
        <name>Zn(2+)</name>
        <dbReference type="ChEBI" id="CHEBI:29105"/>
    </ligand>
</feature>
<feature type="binding site" evidence="2">
    <location>
        <position position="140"/>
    </location>
    <ligand>
        <name>Zn(2+)</name>
        <dbReference type="ChEBI" id="CHEBI:29105"/>
    </ligand>
</feature>
<feature type="site" description="Cleavage in virion (by viral protease)" evidence="2">
    <location>
        <begin position="151"/>
        <end position="152"/>
    </location>
</feature>
<feature type="modified residue" description="Phosphothreonine; by host MAP4K1" evidence="2">
    <location>
        <position position="97"/>
    </location>
</feature>
<feature type="modified residue" description="Phosphoserine; by host" evidence="2">
    <location>
        <position position="145"/>
    </location>
</feature>
<feature type="modified residue" description="Phosphothreonine; by host" evidence="2">
    <location>
        <position position="156"/>
    </location>
</feature>
<feature type="modified residue" description="Phosphoserine; by host MAP4K1" evidence="2">
    <location>
        <position position="166"/>
    </location>
</feature>
<feature type="modified residue" description="Phosphothreonine; by host" evidence="2">
    <location>
        <position position="189"/>
    </location>
</feature>
<sequence length="193" mass="22832">MENRWQVMIVWQVDRMKIRTWNSLVKHHMYISKRAAGWFYRHHYESRHPRVSSEVHIPLEEDSKLVIITYWGLHTGERDWHLGQGVSIEWRQKRYRTQVDPGLADQLIHLHYFDCFSDSAIRKAILGQRVSPRCNYQAGHNKVGSLQYLALTALITPKKIKPPLPSVRKLVEDRWNNPQKTRGHRGSHTMNGH</sequence>
<protein>
    <recommendedName>
        <fullName evidence="2">Virion infectivity factor</fullName>
        <shortName evidence="2">Vif</shortName>
    </recommendedName>
    <alternativeName>
        <fullName evidence="2">SOR protein</fullName>
    </alternativeName>
    <component>
        <recommendedName>
            <fullName evidence="2">p17</fullName>
        </recommendedName>
    </component>
    <component>
        <recommendedName>
            <fullName evidence="2">p7</fullName>
        </recommendedName>
    </component>
</protein>
<gene>
    <name evidence="2" type="primary">vif</name>
</gene>
<evidence type="ECO:0000250" key="1">
    <source>
        <dbReference type="UniProtKB" id="O70897"/>
    </source>
</evidence>
<evidence type="ECO:0000255" key="2">
    <source>
        <dbReference type="HAMAP-Rule" id="MF_04081"/>
    </source>
</evidence>
<evidence type="ECO:0000256" key="3">
    <source>
        <dbReference type="SAM" id="MobiDB-lite"/>
    </source>
</evidence>
<accession>P0C1L9</accession>
<name>VIF_HV1M2</name>
<comment type="function">
    <text evidence="2">Counteracts the innate antiviral activity of host APOBEC3F and APOBEC3G by promoting their ubiquitination and degradation. Acts as a substrate recognition component of an E3 ubiquitin-protein ligase complex: mechanistically, Vif hijacks a host cullin-5-RING E3 ubiquitin-protein ligase complex (ECS complex) and the transcription coactivator CBFB/CBF-beta to form an active E3 ubiquitin-protein ligase complex that targets APOBEC3G and APOBEC3F for polyubiquitination, leading to their degradation by the proteasome. Vif interaction with APOBEC3G also blocks its cytidine deaminase activity in a proteasome-independent manner, suggesting a dual inhibitory mechanism. May interact directly with APOBEC3G mRNA in order to inhibit its translation. Association with CBFB/CBF-beta also inhibits the transcription coactivator activity of CBFB/CBF-beta. Seems to play a role in viral morphology by affecting the stability of the viral nucleoprotein core. Finally, Vif also contributes to the G2 cell cycle arrest observed in HIV infected cells.</text>
</comment>
<comment type="subunit">
    <text evidence="1">Homomultimer; in vitro and presumably in vivo. Interacts with viral RNA and Pr55Gag precursor; these interactions mediate Vif incorporation into the virion. Interacts with the viral reverse transcriptase. Forms cullin-5-RING E3 ubiquitin-protein ligase complex (ECS complex) by interacting with host CUL5, RBX2, elongin BC complex (ELOB and ELOC) and CBFB/CBF-beta. Within the ECS complex, Vif interacts directly with host CUL5, ELOC and APOBEC (APOBEC3F and APOBEC3G) substrates. The ECS complex also contains some single-stranded RNA (ssRNA) that acts as a glue that bridges Vif with APOBEC (APOBEC3F and APOBEC3G) substrates. Interacts with host UBCE7IP1 isoform 3/ZIN and possibly with SAT. Interacts with host tyrosine kinases HCK and FYN; these interactions may decrease level of phosphorylated APOBEC3G incorporation into virions. Interacts with host ABCE1; this interaction may play a role in protecting viral RNA from damage during viral assembly. Interacts with host MDM2; this interaction targets Vif for degradation by the proteasome.</text>
</comment>
<comment type="subcellular location">
    <subcellularLocation>
        <location evidence="2">Host cytoplasm</location>
    </subcellularLocation>
    <subcellularLocation>
        <location evidence="2">Host cell membrane</location>
        <topology evidence="2">Peripheral membrane protein</topology>
        <orientation evidence="2">Cytoplasmic side</orientation>
    </subcellularLocation>
    <subcellularLocation>
        <location evidence="2">Virion</location>
    </subcellularLocation>
    <text evidence="2">In the cytoplasm, seems to colocalize with intermediate filament vimentin. A fraction is associated with the cytoplasmic side of cellular membranes, presumably via the interaction with Pr55Gag precursor. Incorporated in virions at a ratio of approximately 7 to 20 molecules per virion.</text>
</comment>
<comment type="induction">
    <text evidence="2">Expressed late during infection in a Rev-dependent manner.</text>
</comment>
<comment type="domain">
    <text evidence="2">The BC-like-box motif mediates the interaction with elongin BC complex.</text>
</comment>
<comment type="domain">
    <text evidence="2">The HCCH motif (H-x(5)-C-x(18)-C-x(5)-H) mediates the interaction with CUL5.</text>
</comment>
<comment type="PTM">
    <text evidence="2">Processed in virion by the viral protease.</text>
</comment>
<comment type="PTM">
    <text evidence="2">Highly phosphorylated on serine and threonine residues.</text>
</comment>
<comment type="PTM">
    <text evidence="2">Polyubiquitinated and degraded by the proteasome in the presence of APOBEC3G.</text>
</comment>
<comment type="miscellaneous">
    <text evidence="2">Vif-defective viruses show catastrophic failure in reverse transcription due to APOBEC-induced mutations that initiate a DNA base repair pathway and compromise the structural integrity of the ssDNA. In the absence of Vif, the virion is morphologically abnormal.</text>
</comment>
<comment type="miscellaneous">
    <text evidence="2">HIV-1 lineages are divided in three main groups, M (for Major), O (for Outlier), and N (for New, or Non-M, Non-O). The vast majority of strains found worldwide belong to the group M. Group O seems to be endemic to and largely confined to Cameroon and neighboring countries in West Central Africa, where these viruses represent a small minority of HIV-1 strains. The group N is represented by a limited number of isolates from Cameroonian persons. The group M is further subdivided in 9 clades or subtypes (A to D, F to H, J and K).</text>
</comment>
<comment type="miscellaneous">
    <text evidence="2">Required for replication in 'nonpermissive' cells, including primary T-cells, macrophages and certain T-cell lines, but is dispensable for replication in 'permissive' cell lines, such as 293T cells. In nonpermissive cells, Vif-defective viruses can produce virions, but they fail to complete reverse transcription and cannot successfully infect new cells.</text>
</comment>
<comment type="similarity">
    <text evidence="2">Belongs to the primate lentivirus group Vif protein family.</text>
</comment>
<organism>
    <name type="scientific">Human immunodeficiency virus type 1 group M subtype F2 (isolate MP257)</name>
    <name type="common">HIV-1</name>
    <dbReference type="NCBI Taxonomy" id="388823"/>
    <lineage>
        <taxon>Viruses</taxon>
        <taxon>Riboviria</taxon>
        <taxon>Pararnavirae</taxon>
        <taxon>Artverviricota</taxon>
        <taxon>Revtraviricetes</taxon>
        <taxon>Ortervirales</taxon>
        <taxon>Retroviridae</taxon>
        <taxon>Orthoretrovirinae</taxon>
        <taxon>Lentivirus</taxon>
        <taxon>Human immunodeficiency virus type 1</taxon>
    </lineage>
</organism>